<comment type="function">
    <text evidence="1">One of the primary rRNA binding proteins, it binds specifically to the 5'-end of 16S ribosomal RNA.</text>
</comment>
<comment type="subunit">
    <text evidence="1">Part of the 30S ribosomal subunit.</text>
</comment>
<comment type="similarity">
    <text evidence="1">Belongs to the universal ribosomal protein uS17 family.</text>
</comment>
<feature type="chain" id="PRO_1000055003" description="Small ribosomal subunit protein uS17">
    <location>
        <begin position="1"/>
        <end position="88"/>
    </location>
</feature>
<evidence type="ECO:0000255" key="1">
    <source>
        <dbReference type="HAMAP-Rule" id="MF_01345"/>
    </source>
</evidence>
<evidence type="ECO:0000305" key="2"/>
<accession>A4VHN9</accession>
<keyword id="KW-1185">Reference proteome</keyword>
<keyword id="KW-0687">Ribonucleoprotein</keyword>
<keyword id="KW-0689">Ribosomal protein</keyword>
<keyword id="KW-0694">RNA-binding</keyword>
<keyword id="KW-0699">rRNA-binding</keyword>
<gene>
    <name evidence="1" type="primary">rpsQ</name>
    <name type="ordered locus">PST_0793</name>
</gene>
<name>RS17_STUS1</name>
<sequence length="88" mass="10104">MAEAQKTVRTLTGRVVSDKMDKTITVLIERRVKHPIYGKYVKRSTKLHAHDETNQCKIGDKVSIRETRPQSKTKSWALVEVVERAVEV</sequence>
<reference key="1">
    <citation type="journal article" date="2008" name="Proc. Natl. Acad. Sci. U.S.A.">
        <title>Nitrogen fixation island and rhizosphere competence traits in the genome of root-associated Pseudomonas stutzeri A1501.</title>
        <authorList>
            <person name="Yan Y."/>
            <person name="Yang J."/>
            <person name="Dou Y."/>
            <person name="Chen M."/>
            <person name="Ping S."/>
            <person name="Peng J."/>
            <person name="Lu W."/>
            <person name="Zhang W."/>
            <person name="Yao Z."/>
            <person name="Li H."/>
            <person name="Liu W."/>
            <person name="He S."/>
            <person name="Geng L."/>
            <person name="Zhang X."/>
            <person name="Yang F."/>
            <person name="Yu H."/>
            <person name="Zhan Y."/>
            <person name="Li D."/>
            <person name="Lin Z."/>
            <person name="Wang Y."/>
            <person name="Elmerich C."/>
            <person name="Lin M."/>
            <person name="Jin Q."/>
        </authorList>
    </citation>
    <scope>NUCLEOTIDE SEQUENCE [LARGE SCALE GENOMIC DNA]</scope>
    <source>
        <strain>A1501</strain>
    </source>
</reference>
<organism>
    <name type="scientific">Stutzerimonas stutzeri (strain A1501)</name>
    <name type="common">Pseudomonas stutzeri</name>
    <dbReference type="NCBI Taxonomy" id="379731"/>
    <lineage>
        <taxon>Bacteria</taxon>
        <taxon>Pseudomonadati</taxon>
        <taxon>Pseudomonadota</taxon>
        <taxon>Gammaproteobacteria</taxon>
        <taxon>Pseudomonadales</taxon>
        <taxon>Pseudomonadaceae</taxon>
        <taxon>Stutzerimonas</taxon>
    </lineage>
</organism>
<dbReference type="EMBL" id="CP000304">
    <property type="protein sequence ID" value="ABP78490.1"/>
    <property type="molecule type" value="Genomic_DNA"/>
</dbReference>
<dbReference type="RefSeq" id="WP_011911990.1">
    <property type="nucleotide sequence ID" value="NC_009434.1"/>
</dbReference>
<dbReference type="SMR" id="A4VHN9"/>
<dbReference type="GeneID" id="66819935"/>
<dbReference type="KEGG" id="psa:PST_0793"/>
<dbReference type="eggNOG" id="COG0186">
    <property type="taxonomic scope" value="Bacteria"/>
</dbReference>
<dbReference type="HOGENOM" id="CLU_073626_1_1_6"/>
<dbReference type="Proteomes" id="UP000000233">
    <property type="component" value="Chromosome"/>
</dbReference>
<dbReference type="GO" id="GO:0022627">
    <property type="term" value="C:cytosolic small ribosomal subunit"/>
    <property type="evidence" value="ECO:0007669"/>
    <property type="project" value="TreeGrafter"/>
</dbReference>
<dbReference type="GO" id="GO:0019843">
    <property type="term" value="F:rRNA binding"/>
    <property type="evidence" value="ECO:0007669"/>
    <property type="project" value="UniProtKB-UniRule"/>
</dbReference>
<dbReference type="GO" id="GO:0003735">
    <property type="term" value="F:structural constituent of ribosome"/>
    <property type="evidence" value="ECO:0007669"/>
    <property type="project" value="InterPro"/>
</dbReference>
<dbReference type="GO" id="GO:0006412">
    <property type="term" value="P:translation"/>
    <property type="evidence" value="ECO:0007669"/>
    <property type="project" value="UniProtKB-UniRule"/>
</dbReference>
<dbReference type="CDD" id="cd00364">
    <property type="entry name" value="Ribosomal_uS17"/>
    <property type="match status" value="1"/>
</dbReference>
<dbReference type="FunFam" id="2.40.50.140:FF:000014">
    <property type="entry name" value="30S ribosomal protein S17"/>
    <property type="match status" value="1"/>
</dbReference>
<dbReference type="Gene3D" id="2.40.50.140">
    <property type="entry name" value="Nucleic acid-binding proteins"/>
    <property type="match status" value="1"/>
</dbReference>
<dbReference type="HAMAP" id="MF_01345_B">
    <property type="entry name" value="Ribosomal_uS17_B"/>
    <property type="match status" value="1"/>
</dbReference>
<dbReference type="InterPro" id="IPR012340">
    <property type="entry name" value="NA-bd_OB-fold"/>
</dbReference>
<dbReference type="InterPro" id="IPR000266">
    <property type="entry name" value="Ribosomal_uS17"/>
</dbReference>
<dbReference type="InterPro" id="IPR019984">
    <property type="entry name" value="Ribosomal_uS17_bact/chlr"/>
</dbReference>
<dbReference type="NCBIfam" id="NF004123">
    <property type="entry name" value="PRK05610.1"/>
    <property type="match status" value="1"/>
</dbReference>
<dbReference type="NCBIfam" id="TIGR03635">
    <property type="entry name" value="uS17_bact"/>
    <property type="match status" value="1"/>
</dbReference>
<dbReference type="PANTHER" id="PTHR10744">
    <property type="entry name" value="40S RIBOSOMAL PROTEIN S11 FAMILY MEMBER"/>
    <property type="match status" value="1"/>
</dbReference>
<dbReference type="PANTHER" id="PTHR10744:SF1">
    <property type="entry name" value="SMALL RIBOSOMAL SUBUNIT PROTEIN US17M"/>
    <property type="match status" value="1"/>
</dbReference>
<dbReference type="Pfam" id="PF00366">
    <property type="entry name" value="Ribosomal_S17"/>
    <property type="match status" value="1"/>
</dbReference>
<dbReference type="PRINTS" id="PR00973">
    <property type="entry name" value="RIBOSOMALS17"/>
</dbReference>
<dbReference type="SUPFAM" id="SSF50249">
    <property type="entry name" value="Nucleic acid-binding proteins"/>
    <property type="match status" value="1"/>
</dbReference>
<proteinExistence type="inferred from homology"/>
<protein>
    <recommendedName>
        <fullName evidence="1">Small ribosomal subunit protein uS17</fullName>
    </recommendedName>
    <alternativeName>
        <fullName evidence="2">30S ribosomal protein S17</fullName>
    </alternativeName>
</protein>